<gene>
    <name evidence="6" type="primary">Snmp2</name>
</gene>
<accession>E5EZX0</accession>
<sequence length="522" mass="58173">MLGKHTKLFFGVSLVALIVSVILAAWGFPKIVSKQIQKNIQIDNSSVMFEKWRKIPMPLTFNVYVFNVTNVEDVNNGAKPRLQQIGPYAYKEYRERTVLGYGDNDTVSYTLKKTFIFDQEASGLLSEDDEVTVIHFSYMAAILTVNDMMPSITGVVNGALEQFFTNLTDPFLRVKVKDLFFDGVYVNCAGNHSALGLVCGKLKADAPQTMRPAGDGNGFYFSMFSHMNRTESGPYEMIRGRENIKELGHIISYKGKSFMKNWGNDMYCGQLNGSDASIFPPIDENNVPEKLYTFEPEVCRSLYASLVGKSSIFNMSAYYYEISSDALASKSANPGNKCYCKKNWSANHDGCLIMGILNLMPCQDAPAIASLPHFYLASEELLEYFDGGISPDKEKHNTYIYLEPVTGVVLKGLRRLQFNIELRNIPMVPQLAKVPTGLFPLLWIEEGAELPDSIIQELRQSHTLLGYVEAVRWALLAIAIVATAISAIAVARSGLIPVWPRNANSVSFILSPHPNSDVNKVH</sequence>
<reference evidence="5 6" key="1">
    <citation type="journal article" date="2011" name="Insect Biochem. Mol. Biol.">
        <title>Asian corn borer pheromone binding protein 3, a candidate for evolving specificity to the 12-tetradecenyl acetate sex pheromone.</title>
        <authorList>
            <person name="Allen J.E."/>
            <person name="Wanner K.W."/>
        </authorList>
    </citation>
    <scope>NUCLEOTIDE SEQUENCE [MRNA]</scope>
    <scope>TISSUE SPECIFICITY</scope>
</reference>
<protein>
    <recommendedName>
        <fullName evidence="6">Sensory neuron membrane protein 2</fullName>
    </recommendedName>
</protein>
<dbReference type="EMBL" id="HM044393">
    <property type="protein sequence ID" value="ADQ73891.1"/>
    <property type="molecule type" value="mRNA"/>
</dbReference>
<dbReference type="SMR" id="E5EZX0"/>
<dbReference type="GlyCosmos" id="E5EZX0">
    <property type="glycosylation" value="9 sites, No reported glycans"/>
</dbReference>
<dbReference type="GO" id="GO:0005737">
    <property type="term" value="C:cytoplasm"/>
    <property type="evidence" value="ECO:0007669"/>
    <property type="project" value="TreeGrafter"/>
</dbReference>
<dbReference type="GO" id="GO:0005886">
    <property type="term" value="C:plasma membrane"/>
    <property type="evidence" value="ECO:0007669"/>
    <property type="project" value="UniProtKB-SubCell"/>
</dbReference>
<dbReference type="GO" id="GO:0005044">
    <property type="term" value="F:scavenger receptor activity"/>
    <property type="evidence" value="ECO:0007669"/>
    <property type="project" value="TreeGrafter"/>
</dbReference>
<dbReference type="GO" id="GO:0007608">
    <property type="term" value="P:sensory perception of smell"/>
    <property type="evidence" value="ECO:0007669"/>
    <property type="project" value="UniProtKB-KW"/>
</dbReference>
<dbReference type="InterPro" id="IPR002159">
    <property type="entry name" value="CD36_fam"/>
</dbReference>
<dbReference type="PANTHER" id="PTHR11923">
    <property type="entry name" value="SCAVENGER RECEPTOR CLASS B TYPE-1 SR-B1"/>
    <property type="match status" value="1"/>
</dbReference>
<dbReference type="PANTHER" id="PTHR11923:SF69">
    <property type="entry name" value="SENSORY NEURON MEMBRANE PROTEIN 1"/>
    <property type="match status" value="1"/>
</dbReference>
<dbReference type="Pfam" id="PF01130">
    <property type="entry name" value="CD36"/>
    <property type="match status" value="1"/>
</dbReference>
<dbReference type="PRINTS" id="PR01609">
    <property type="entry name" value="CD36FAMILY"/>
</dbReference>
<comment type="function">
    <text evidence="1">Plays an olfactory role that is not restricted to pheromone sensitivity.</text>
</comment>
<comment type="subcellular location">
    <subcellularLocation>
        <location evidence="1">Cell membrane</location>
        <topology evidence="1">Multi-pass membrane protein</topology>
    </subcellularLocation>
</comment>
<comment type="tissue specificity">
    <text evidence="4">Detected in both male and female antennal tissues. Expression is two to three fold higher in male compared to female antenna. Detected at low levels in all body tissues except the female abdomen.</text>
</comment>
<comment type="similarity">
    <text evidence="3">Belongs to the CD36 family.</text>
</comment>
<feature type="chain" id="PRO_0000413632" description="Sensory neuron membrane protein 2">
    <location>
        <begin position="1"/>
        <end position="522"/>
    </location>
</feature>
<feature type="topological domain" description="Cytoplasmic" evidence="3">
    <location>
        <begin position="1"/>
        <end position="7"/>
    </location>
</feature>
<feature type="transmembrane region" description="Helical" evidence="3">
    <location>
        <begin position="8"/>
        <end position="28"/>
    </location>
</feature>
<feature type="topological domain" description="Extracellular" evidence="3">
    <location>
        <begin position="29"/>
        <end position="469"/>
    </location>
</feature>
<feature type="transmembrane region" description="Helical" evidence="3">
    <location>
        <begin position="470"/>
        <end position="490"/>
    </location>
</feature>
<feature type="topological domain" description="Cytoplasmic" evidence="3">
    <location>
        <begin position="491"/>
        <end position="522"/>
    </location>
</feature>
<feature type="glycosylation site" description="N-linked (GlcNAc...) asparagine" evidence="3">
    <location>
        <position position="44"/>
    </location>
</feature>
<feature type="glycosylation site" description="N-linked (GlcNAc...) asparagine" evidence="3">
    <location>
        <position position="67"/>
    </location>
</feature>
<feature type="glycosylation site" description="N-linked (GlcNAc...) asparagine" evidence="3">
    <location>
        <position position="104"/>
    </location>
</feature>
<feature type="glycosylation site" description="N-linked (GlcNAc...) asparagine" evidence="3">
    <location>
        <position position="166"/>
    </location>
</feature>
<feature type="glycosylation site" description="N-linked (GlcNAc...) asparagine" evidence="3">
    <location>
        <position position="191"/>
    </location>
</feature>
<feature type="glycosylation site" description="N-linked (GlcNAc...) asparagine" evidence="3">
    <location>
        <position position="228"/>
    </location>
</feature>
<feature type="glycosylation site" description="N-linked (GlcNAc...) asparagine" evidence="3">
    <location>
        <position position="272"/>
    </location>
</feature>
<feature type="glycosylation site" description="N-linked (GlcNAc...) asparagine" evidence="3">
    <location>
        <position position="314"/>
    </location>
</feature>
<feature type="glycosylation site" description="N-linked (GlcNAc...) asparagine" evidence="3">
    <location>
        <position position="343"/>
    </location>
</feature>
<feature type="disulfide bond" evidence="2">
    <location>
        <begin position="268"/>
        <end position="338"/>
    </location>
</feature>
<feature type="disulfide bond" evidence="2">
    <location>
        <begin position="299"/>
        <end position="362"/>
    </location>
</feature>
<feature type="disulfide bond" evidence="2">
    <location>
        <begin position="340"/>
        <end position="351"/>
    </location>
</feature>
<name>SNMP2_OSTFU</name>
<proteinExistence type="evidence at transcript level"/>
<evidence type="ECO:0000250" key="1">
    <source>
        <dbReference type="UniProtKB" id="O02351"/>
    </source>
</evidence>
<evidence type="ECO:0000250" key="2">
    <source>
        <dbReference type="UniProtKB" id="P26201"/>
    </source>
</evidence>
<evidence type="ECO:0000255" key="3"/>
<evidence type="ECO:0000269" key="4">
    <source>
    </source>
</evidence>
<evidence type="ECO:0000305" key="5"/>
<evidence type="ECO:0000312" key="6">
    <source>
        <dbReference type="EMBL" id="ADQ73891.1"/>
    </source>
</evidence>
<organism>
    <name type="scientific">Ostrinia furnacalis</name>
    <name type="common">Asian corn borer</name>
    <dbReference type="NCBI Taxonomy" id="93504"/>
    <lineage>
        <taxon>Eukaryota</taxon>
        <taxon>Metazoa</taxon>
        <taxon>Ecdysozoa</taxon>
        <taxon>Arthropoda</taxon>
        <taxon>Hexapoda</taxon>
        <taxon>Insecta</taxon>
        <taxon>Pterygota</taxon>
        <taxon>Neoptera</taxon>
        <taxon>Endopterygota</taxon>
        <taxon>Lepidoptera</taxon>
        <taxon>Glossata</taxon>
        <taxon>Ditrysia</taxon>
        <taxon>Pyraloidea</taxon>
        <taxon>Crambidae</taxon>
        <taxon>Pyraustinae</taxon>
        <taxon>Ostrinia</taxon>
    </lineage>
</organism>
<keyword id="KW-1003">Cell membrane</keyword>
<keyword id="KW-1015">Disulfide bond</keyword>
<keyword id="KW-0325">Glycoprotein</keyword>
<keyword id="KW-0472">Membrane</keyword>
<keyword id="KW-0552">Olfaction</keyword>
<keyword id="KW-0675">Receptor</keyword>
<keyword id="KW-0716">Sensory transduction</keyword>
<keyword id="KW-0812">Transmembrane</keyword>
<keyword id="KW-1133">Transmembrane helix</keyword>